<dbReference type="EC" id="1.14.13.8"/>
<dbReference type="EMBL" id="AL021026">
    <property type="status" value="NOT_ANNOTATED_CDS"/>
    <property type="molecule type" value="Genomic_DNA"/>
</dbReference>
<dbReference type="SMR" id="O60774"/>
<dbReference type="iPTMnet" id="O60774"/>
<dbReference type="PhosphoSitePlus" id="O60774"/>
<dbReference type="BioMuta" id="HGNC:24024"/>
<dbReference type="MassIVE" id="O60774"/>
<dbReference type="PaxDb" id="9606-ENSP00000236166"/>
<dbReference type="UCSC" id="uc057ngh.1">
    <property type="organism name" value="human"/>
</dbReference>
<dbReference type="AGR" id="HGNC:24024"/>
<dbReference type="GeneCards" id="FMO6P"/>
<dbReference type="HGNC" id="HGNC:24024">
    <property type="gene designation" value="FMO6P"/>
</dbReference>
<dbReference type="neXtProt" id="NX_O60774"/>
<dbReference type="PharmGKB" id="PA142671753"/>
<dbReference type="eggNOG" id="KOG1399">
    <property type="taxonomic scope" value="Eukaryota"/>
</dbReference>
<dbReference type="InParanoid" id="O60774"/>
<dbReference type="PAN-GO" id="O60774">
    <property type="GO annotations" value="1 GO annotation based on evolutionary models"/>
</dbReference>
<dbReference type="PhylomeDB" id="O60774"/>
<dbReference type="TreeFam" id="TF105285"/>
<dbReference type="PathwayCommons" id="O60774"/>
<dbReference type="Pharos" id="O60774">
    <property type="development level" value="Tdark"/>
</dbReference>
<dbReference type="Proteomes" id="UP000005640">
    <property type="component" value="Unplaced"/>
</dbReference>
<dbReference type="RNAct" id="O60774">
    <property type="molecule type" value="protein"/>
</dbReference>
<dbReference type="GO" id="GO:0005789">
    <property type="term" value="C:endoplasmic reticulum membrane"/>
    <property type="evidence" value="ECO:0007669"/>
    <property type="project" value="UniProtKB-SubCell"/>
</dbReference>
<dbReference type="GO" id="GO:0050660">
    <property type="term" value="F:flavin adenine dinucleotide binding"/>
    <property type="evidence" value="ECO:0007669"/>
    <property type="project" value="InterPro"/>
</dbReference>
<dbReference type="GO" id="GO:0004499">
    <property type="term" value="F:N,N-dimethylaniline monooxygenase activity"/>
    <property type="evidence" value="ECO:0000318"/>
    <property type="project" value="GO_Central"/>
</dbReference>
<dbReference type="GO" id="GO:0050661">
    <property type="term" value="F:NADP binding"/>
    <property type="evidence" value="ECO:0007669"/>
    <property type="project" value="InterPro"/>
</dbReference>
<dbReference type="FunFam" id="3.50.50.60:FF:000023">
    <property type="entry name" value="Dimethylaniline monooxygenase [N-oxide-forming]"/>
    <property type="match status" value="1"/>
</dbReference>
<dbReference type="FunFam" id="3.50.50.60:FF:000042">
    <property type="entry name" value="Dimethylaniline monooxygenase [N-oxide-forming]"/>
    <property type="match status" value="1"/>
</dbReference>
<dbReference type="FunFam" id="3.50.50.60:FF:000073">
    <property type="entry name" value="Dimethylaniline monooxygenase [N-oxide-forming]"/>
    <property type="match status" value="1"/>
</dbReference>
<dbReference type="FunFam" id="3.50.50.60:FF:000279">
    <property type="entry name" value="Dimethylaniline monooxygenase [N-oxide-forming]"/>
    <property type="match status" value="1"/>
</dbReference>
<dbReference type="Gene3D" id="3.50.50.60">
    <property type="entry name" value="FAD/NAD(P)-binding domain"/>
    <property type="match status" value="2"/>
</dbReference>
<dbReference type="InterPro" id="IPR036188">
    <property type="entry name" value="FAD/NAD-bd_sf"/>
</dbReference>
<dbReference type="InterPro" id="IPR000960">
    <property type="entry name" value="Flavin_mOase"/>
</dbReference>
<dbReference type="InterPro" id="IPR020946">
    <property type="entry name" value="Flavin_mOase-like"/>
</dbReference>
<dbReference type="InterPro" id="IPR002255">
    <property type="entry name" value="Flavin_mOase_3"/>
</dbReference>
<dbReference type="InterPro" id="IPR050346">
    <property type="entry name" value="FMO-like"/>
</dbReference>
<dbReference type="PANTHER" id="PTHR23023">
    <property type="entry name" value="DIMETHYLANILINE MONOOXYGENASE"/>
    <property type="match status" value="1"/>
</dbReference>
<dbReference type="Pfam" id="PF00743">
    <property type="entry name" value="FMO-like"/>
    <property type="match status" value="1"/>
</dbReference>
<dbReference type="PIRSF" id="PIRSF000332">
    <property type="entry name" value="FMO"/>
    <property type="match status" value="1"/>
</dbReference>
<dbReference type="PRINTS" id="PR00370">
    <property type="entry name" value="FMOXYGENASE"/>
</dbReference>
<dbReference type="PRINTS" id="PR01123">
    <property type="entry name" value="FMOXYGENASE3"/>
</dbReference>
<dbReference type="SUPFAM" id="SSF51905">
    <property type="entry name" value="FAD/NAD(P)-binding domain"/>
    <property type="match status" value="2"/>
</dbReference>
<reference key="1">
    <citation type="journal article" date="2006" name="Nature">
        <title>The DNA sequence and biological annotation of human chromosome 1.</title>
        <authorList>
            <person name="Gregory S.G."/>
            <person name="Barlow K.F."/>
            <person name="McLay K.E."/>
            <person name="Kaul R."/>
            <person name="Swarbreck D."/>
            <person name="Dunham A."/>
            <person name="Scott C.E."/>
            <person name="Howe K.L."/>
            <person name="Woodfine K."/>
            <person name="Spencer C.C.A."/>
            <person name="Jones M.C."/>
            <person name="Gillson C."/>
            <person name="Searle S."/>
            <person name="Zhou Y."/>
            <person name="Kokocinski F."/>
            <person name="McDonald L."/>
            <person name="Evans R."/>
            <person name="Phillips K."/>
            <person name="Atkinson A."/>
            <person name="Cooper R."/>
            <person name="Jones C."/>
            <person name="Hall R.E."/>
            <person name="Andrews T.D."/>
            <person name="Lloyd C."/>
            <person name="Ainscough R."/>
            <person name="Almeida J.P."/>
            <person name="Ambrose K.D."/>
            <person name="Anderson F."/>
            <person name="Andrew R.W."/>
            <person name="Ashwell R.I.S."/>
            <person name="Aubin K."/>
            <person name="Babbage A.K."/>
            <person name="Bagguley C.L."/>
            <person name="Bailey J."/>
            <person name="Beasley H."/>
            <person name="Bethel G."/>
            <person name="Bird C.P."/>
            <person name="Bray-Allen S."/>
            <person name="Brown J.Y."/>
            <person name="Brown A.J."/>
            <person name="Buckley D."/>
            <person name="Burton J."/>
            <person name="Bye J."/>
            <person name="Carder C."/>
            <person name="Chapman J.C."/>
            <person name="Clark S.Y."/>
            <person name="Clarke G."/>
            <person name="Clee C."/>
            <person name="Cobley V."/>
            <person name="Collier R.E."/>
            <person name="Corby N."/>
            <person name="Coville G.J."/>
            <person name="Davies J."/>
            <person name="Deadman R."/>
            <person name="Dunn M."/>
            <person name="Earthrowl M."/>
            <person name="Ellington A.G."/>
            <person name="Errington H."/>
            <person name="Frankish A."/>
            <person name="Frankland J."/>
            <person name="French L."/>
            <person name="Garner P."/>
            <person name="Garnett J."/>
            <person name="Gay L."/>
            <person name="Ghori M.R.J."/>
            <person name="Gibson R."/>
            <person name="Gilby L.M."/>
            <person name="Gillett W."/>
            <person name="Glithero R.J."/>
            <person name="Grafham D.V."/>
            <person name="Griffiths C."/>
            <person name="Griffiths-Jones S."/>
            <person name="Grocock R."/>
            <person name="Hammond S."/>
            <person name="Harrison E.S.I."/>
            <person name="Hart E."/>
            <person name="Haugen E."/>
            <person name="Heath P.D."/>
            <person name="Holmes S."/>
            <person name="Holt K."/>
            <person name="Howden P.J."/>
            <person name="Hunt A.R."/>
            <person name="Hunt S.E."/>
            <person name="Hunter G."/>
            <person name="Isherwood J."/>
            <person name="James R."/>
            <person name="Johnson C."/>
            <person name="Johnson D."/>
            <person name="Joy A."/>
            <person name="Kay M."/>
            <person name="Kershaw J.K."/>
            <person name="Kibukawa M."/>
            <person name="Kimberley A.M."/>
            <person name="King A."/>
            <person name="Knights A.J."/>
            <person name="Lad H."/>
            <person name="Laird G."/>
            <person name="Lawlor S."/>
            <person name="Leongamornlert D.A."/>
            <person name="Lloyd D.M."/>
            <person name="Loveland J."/>
            <person name="Lovell J."/>
            <person name="Lush M.J."/>
            <person name="Lyne R."/>
            <person name="Martin S."/>
            <person name="Mashreghi-Mohammadi M."/>
            <person name="Matthews L."/>
            <person name="Matthews N.S.W."/>
            <person name="McLaren S."/>
            <person name="Milne S."/>
            <person name="Mistry S."/>
            <person name="Moore M.J.F."/>
            <person name="Nickerson T."/>
            <person name="O'Dell C.N."/>
            <person name="Oliver K."/>
            <person name="Palmeiri A."/>
            <person name="Palmer S.A."/>
            <person name="Parker A."/>
            <person name="Patel D."/>
            <person name="Pearce A.V."/>
            <person name="Peck A.I."/>
            <person name="Pelan S."/>
            <person name="Phelps K."/>
            <person name="Phillimore B.J."/>
            <person name="Plumb R."/>
            <person name="Rajan J."/>
            <person name="Raymond C."/>
            <person name="Rouse G."/>
            <person name="Saenphimmachak C."/>
            <person name="Sehra H.K."/>
            <person name="Sheridan E."/>
            <person name="Shownkeen R."/>
            <person name="Sims S."/>
            <person name="Skuce C.D."/>
            <person name="Smith M."/>
            <person name="Steward C."/>
            <person name="Subramanian S."/>
            <person name="Sycamore N."/>
            <person name="Tracey A."/>
            <person name="Tromans A."/>
            <person name="Van Helmond Z."/>
            <person name="Wall M."/>
            <person name="Wallis J.M."/>
            <person name="White S."/>
            <person name="Whitehead S.L."/>
            <person name="Wilkinson J.E."/>
            <person name="Willey D.L."/>
            <person name="Williams H."/>
            <person name="Wilming L."/>
            <person name="Wray P.W."/>
            <person name="Wu Z."/>
            <person name="Coulson A."/>
            <person name="Vaudin M."/>
            <person name="Sulston J.E."/>
            <person name="Durbin R.M."/>
            <person name="Hubbard T."/>
            <person name="Wooster R."/>
            <person name="Dunham I."/>
            <person name="Carter N.P."/>
            <person name="McVean G."/>
            <person name="Ross M.T."/>
            <person name="Harrow J."/>
            <person name="Olson M.V."/>
            <person name="Beck S."/>
            <person name="Rogers J."/>
            <person name="Bentley D.R."/>
        </authorList>
    </citation>
    <scope>NUCLEOTIDE SEQUENCE [LARGE SCALE GENOMIC DNA]</scope>
</reference>
<reference key="2">
    <citation type="journal article" date="2002" name="Mol. Pharmacol.">
        <title>Alternative processing of the human FMO6 gene renders transcripts incapable of encoding a functional flavin-containing monooxygenase.</title>
        <authorList>
            <person name="Hines R.N."/>
            <person name="Hopp K.A."/>
            <person name="Franco J."/>
            <person name="Saeian K."/>
            <person name="Begun F.P."/>
        </authorList>
    </citation>
    <scope>ANALYSIS OF SPLICE VARIANTS</scope>
</reference>
<reference key="3">
    <citation type="journal article" date="2003" name="Drug Metab. Dispos.">
        <title>Identification of novel variants of the flavin-containing monooxygenase gene family in African Americans.</title>
        <authorList>
            <person name="Furnes B."/>
            <person name="Feng J."/>
            <person name="Sommer S.S."/>
            <person name="Schlenk D."/>
        </authorList>
    </citation>
    <scope>VARIANTS ILE-127 AND ILE-257</scope>
    <scope>POLYMORPHISM IN POSITION 105</scope>
</reference>
<keyword id="KW-0256">Endoplasmic reticulum</keyword>
<keyword id="KW-0274">FAD</keyword>
<keyword id="KW-0285">Flavoprotein</keyword>
<keyword id="KW-0472">Membrane</keyword>
<keyword id="KW-0492">Microsome</keyword>
<keyword id="KW-0503">Monooxygenase</keyword>
<keyword id="KW-0521">NADP</keyword>
<keyword id="KW-0560">Oxidoreductase</keyword>
<keyword id="KW-1267">Proteomics identification</keyword>
<keyword id="KW-1185">Reference proteome</keyword>
<keyword id="KW-0812">Transmembrane</keyword>
<keyword id="KW-1133">Transmembrane helix</keyword>
<name>FMO6_HUMAN</name>
<proteinExistence type="uncertain"/>
<comment type="function">
    <text>It is probable that this protein is only produced in very small quantity or not at all as the gene coding for it seems to be unable to produce full-length transcripts.</text>
</comment>
<comment type="catalytic activity">
    <reaction>
        <text>N,N-dimethylaniline + NADPH + O2 + H(+) = N,N-dimethylaniline N-oxide + NADP(+) + H2O</text>
        <dbReference type="Rhea" id="RHEA:24468"/>
        <dbReference type="ChEBI" id="CHEBI:15377"/>
        <dbReference type="ChEBI" id="CHEBI:15378"/>
        <dbReference type="ChEBI" id="CHEBI:15379"/>
        <dbReference type="ChEBI" id="CHEBI:16269"/>
        <dbReference type="ChEBI" id="CHEBI:17735"/>
        <dbReference type="ChEBI" id="CHEBI:57783"/>
        <dbReference type="ChEBI" id="CHEBI:58349"/>
        <dbReference type="EC" id="1.14.13.8"/>
    </reaction>
</comment>
<comment type="cofactor">
    <cofactor evidence="1">
        <name>FAD</name>
        <dbReference type="ChEBI" id="CHEBI:57692"/>
    </cofactor>
</comment>
<comment type="subcellular location">
    <subcellularLocation>
        <location evidence="1">Microsome membrane</location>
        <topology evidence="3">Single-pass membrane protein</topology>
    </subcellularLocation>
    <subcellularLocation>
        <location evidence="1">Endoplasmic reticulum membrane</location>
        <topology evidence="3">Single-pass membrane protein</topology>
    </subcellularLocation>
</comment>
<comment type="polymorphism">
    <text evidence="4">There are two alleles; one major, FMO6X105 (truncated form) and one minor, FMO6Q105, (shown here) (full-length form similar to the protein found in other mammals) (PubMed:12527699). A nonsense mutation transforms the Gln-105 into a premature stop codon (PubMed:12527699). The truncated protein is catalytically inactive (PubMed:12527699).</text>
</comment>
<comment type="similarity">
    <text evidence="5">Belongs to the FMO family.</text>
</comment>
<comment type="caution">
    <text evidence="5">Could be the product of a pseudogene.</text>
</comment>
<sequence>MSKRVGIIGAGVSGLAAIWCCLEEGLEPTCFERSDDVGGLWKFSDHTEEGRASIYQSVFTNSSKEMMCFPDFPYPDDYPNYIHHSKLQEYIKTYAQKKDLLRYIQFETLVSGIKKCPSFLVTGQWVVVTEKDGKQESTIFDAVMICSGHHVYPNLPTDSFPGLDQFRGNYLHSRDYKNPEAFKGKRVLVIGLGNSGSDIAVELSRLATQVIISTRSASWVMSRVWDDGYPWDMMYVTRFASFLRNVLPSFISDWLYVQKMNTWFKHENYGLMPLNGSLRKEPVFNDELPSRILCGTLSIKPSVKEFTETSAVFEDGTMFEAIDSVIFATGYDYSYPFLDETIMKSRNNEVTLFKGIFPPLMEKPTLAVIGLVQSLGAAIPTADLQAWWAAKVFANSCTLPTTNEMMDDTDEKMGKKLKCMFSSFFMFGQSQTLQTDYITYVDELGSFIGAKPNIPWLFLTDPRLALEVYFGPCSPYQFRLMGPGKWDGARNAILTQWNRTVKPTRTRVVSEVQRPHPFYNLLKMLSFPLLLLAVTLTFY</sequence>
<accession>O60774</accession>
<feature type="chain" id="PRO_0000147669" description="Putative dimethylaniline monooxygenase [N-oxide-forming] 6">
    <location>
        <begin position="1"/>
        <end position="539"/>
    </location>
</feature>
<feature type="transmembrane region" description="Helical" evidence="3">
    <location>
        <begin position="518"/>
        <end position="538"/>
    </location>
</feature>
<feature type="binding site" evidence="2">
    <location>
        <begin position="9"/>
        <end position="13"/>
    </location>
    <ligand>
        <name>FAD</name>
        <dbReference type="ChEBI" id="CHEBI:57692"/>
    </ligand>
</feature>
<feature type="binding site" evidence="2">
    <location>
        <position position="32"/>
    </location>
    <ligand>
        <name>FAD</name>
        <dbReference type="ChEBI" id="CHEBI:57692"/>
    </ligand>
</feature>
<feature type="binding site" evidence="2">
    <location>
        <begin position="40"/>
        <end position="41"/>
    </location>
    <ligand>
        <name>FAD</name>
        <dbReference type="ChEBI" id="CHEBI:57692"/>
    </ligand>
</feature>
<feature type="binding site" evidence="2">
    <location>
        <begin position="61"/>
        <end position="62"/>
    </location>
    <ligand>
        <name>FAD</name>
        <dbReference type="ChEBI" id="CHEBI:57692"/>
    </ligand>
</feature>
<feature type="binding site" evidence="2">
    <location>
        <begin position="195"/>
        <end position="198"/>
    </location>
    <ligand>
        <name>NADP(+)</name>
        <dbReference type="ChEBI" id="CHEBI:58349"/>
    </ligand>
</feature>
<feature type="sequence variant" id="VAR_015371" description="In dbSNP:rs61731844." evidence="4">
    <original>V</original>
    <variation>I</variation>
    <location>
        <position position="127"/>
    </location>
</feature>
<feature type="sequence variant" id="VAR_015372" description="In dbSNP:rs2272797." evidence="4">
    <original>V</original>
    <variation>I</variation>
    <location>
        <position position="257"/>
    </location>
</feature>
<organism>
    <name type="scientific">Homo sapiens</name>
    <name type="common">Human</name>
    <dbReference type="NCBI Taxonomy" id="9606"/>
    <lineage>
        <taxon>Eukaryota</taxon>
        <taxon>Metazoa</taxon>
        <taxon>Chordata</taxon>
        <taxon>Craniata</taxon>
        <taxon>Vertebrata</taxon>
        <taxon>Euteleostomi</taxon>
        <taxon>Mammalia</taxon>
        <taxon>Eutheria</taxon>
        <taxon>Euarchontoglires</taxon>
        <taxon>Primates</taxon>
        <taxon>Haplorrhini</taxon>
        <taxon>Catarrhini</taxon>
        <taxon>Hominidae</taxon>
        <taxon>Homo</taxon>
    </lineage>
</organism>
<evidence type="ECO:0000250" key="1"/>
<evidence type="ECO:0000250" key="2">
    <source>
        <dbReference type="UniProtKB" id="Q9HFE4"/>
    </source>
</evidence>
<evidence type="ECO:0000255" key="3"/>
<evidence type="ECO:0000269" key="4">
    <source>
    </source>
</evidence>
<evidence type="ECO:0000305" key="5"/>
<protein>
    <recommendedName>
        <fullName>Putative dimethylaniline monooxygenase [N-oxide-forming] 6</fullName>
        <ecNumber>1.14.13.8</ecNumber>
    </recommendedName>
    <alternativeName>
        <fullName>Dimethylaniline oxidase 6</fullName>
    </alternativeName>
    <alternativeName>
        <fullName>Flavin-containing monooxygenase 6</fullName>
        <shortName>FMO 6</shortName>
    </alternativeName>
</protein>
<gene>
    <name type="primary">FMO6P</name>
    <name type="synonym">FMO6</name>
</gene>